<organism>
    <name type="scientific">Brucella melitensis biotype 2 (strain ATCC 23457)</name>
    <dbReference type="NCBI Taxonomy" id="546272"/>
    <lineage>
        <taxon>Bacteria</taxon>
        <taxon>Pseudomonadati</taxon>
        <taxon>Pseudomonadota</taxon>
        <taxon>Alphaproteobacteria</taxon>
        <taxon>Hyphomicrobiales</taxon>
        <taxon>Brucellaceae</taxon>
        <taxon>Brucella/Ochrobactrum group</taxon>
        <taxon>Brucella</taxon>
    </lineage>
</organism>
<sequence length="201" mass="21646">MSKRIAGPEIERLIQLLARVPGLGPRSARRAALHLIKKKEALLVPLGGAMQEAAEKVRICSCCGNVDTSDPCTICTDERRDPATLIVVEDVSDLWALERADTMNVRYHVLGGRLSPLDGIGPDDLNIKGLVERVASGAIKEVILAVNATVEGQTTAHYITDQLSNFDMRVTRLAHGVPVGGELDYLDEGTLAAALRARTTL</sequence>
<comment type="function">
    <text evidence="1">May play a role in DNA repair. It seems to be involved in an RecBC-independent recombinational process of DNA repair. It may act with RecF and RecO.</text>
</comment>
<comment type="similarity">
    <text evidence="1">Belongs to the RecR family.</text>
</comment>
<protein>
    <recommendedName>
        <fullName evidence="1">Recombination protein RecR</fullName>
    </recommendedName>
</protein>
<name>RECR_BRUMB</name>
<keyword id="KW-0227">DNA damage</keyword>
<keyword id="KW-0233">DNA recombination</keyword>
<keyword id="KW-0234">DNA repair</keyword>
<keyword id="KW-0479">Metal-binding</keyword>
<keyword id="KW-0862">Zinc</keyword>
<keyword id="KW-0863">Zinc-finger</keyword>
<accession>C0RG96</accession>
<proteinExistence type="inferred from homology"/>
<dbReference type="EMBL" id="CP001488">
    <property type="protein sequence ID" value="ACN99853.1"/>
    <property type="molecule type" value="Genomic_DNA"/>
</dbReference>
<dbReference type="RefSeq" id="WP_004686685.1">
    <property type="nucleotide sequence ID" value="NC_012441.1"/>
</dbReference>
<dbReference type="SMR" id="C0RG96"/>
<dbReference type="KEGG" id="bmi:BMEA_A0032"/>
<dbReference type="HOGENOM" id="CLU_060739_1_1_5"/>
<dbReference type="Proteomes" id="UP000001748">
    <property type="component" value="Chromosome I"/>
</dbReference>
<dbReference type="GO" id="GO:0003677">
    <property type="term" value="F:DNA binding"/>
    <property type="evidence" value="ECO:0007669"/>
    <property type="project" value="UniProtKB-UniRule"/>
</dbReference>
<dbReference type="GO" id="GO:0008270">
    <property type="term" value="F:zinc ion binding"/>
    <property type="evidence" value="ECO:0007669"/>
    <property type="project" value="UniProtKB-KW"/>
</dbReference>
<dbReference type="GO" id="GO:0006310">
    <property type="term" value="P:DNA recombination"/>
    <property type="evidence" value="ECO:0007669"/>
    <property type="project" value="UniProtKB-UniRule"/>
</dbReference>
<dbReference type="GO" id="GO:0006281">
    <property type="term" value="P:DNA repair"/>
    <property type="evidence" value="ECO:0007669"/>
    <property type="project" value="UniProtKB-UniRule"/>
</dbReference>
<dbReference type="CDD" id="cd01025">
    <property type="entry name" value="TOPRIM_recR"/>
    <property type="match status" value="1"/>
</dbReference>
<dbReference type="Gene3D" id="3.40.1360.10">
    <property type="match status" value="1"/>
</dbReference>
<dbReference type="Gene3D" id="6.10.250.240">
    <property type="match status" value="1"/>
</dbReference>
<dbReference type="Gene3D" id="1.10.8.420">
    <property type="entry name" value="RecR Domain 1"/>
    <property type="match status" value="1"/>
</dbReference>
<dbReference type="HAMAP" id="MF_00017">
    <property type="entry name" value="RecR"/>
    <property type="match status" value="1"/>
</dbReference>
<dbReference type="InterPro" id="IPR000093">
    <property type="entry name" value="DNA_Rcmb_RecR"/>
</dbReference>
<dbReference type="InterPro" id="IPR023627">
    <property type="entry name" value="Rcmb_RecR"/>
</dbReference>
<dbReference type="InterPro" id="IPR015967">
    <property type="entry name" value="Rcmb_RecR_Znf"/>
</dbReference>
<dbReference type="InterPro" id="IPR006171">
    <property type="entry name" value="TOPRIM_dom"/>
</dbReference>
<dbReference type="InterPro" id="IPR034137">
    <property type="entry name" value="TOPRIM_RecR"/>
</dbReference>
<dbReference type="NCBIfam" id="TIGR00615">
    <property type="entry name" value="recR"/>
    <property type="match status" value="1"/>
</dbReference>
<dbReference type="PANTHER" id="PTHR30446">
    <property type="entry name" value="RECOMBINATION PROTEIN RECR"/>
    <property type="match status" value="1"/>
</dbReference>
<dbReference type="PANTHER" id="PTHR30446:SF0">
    <property type="entry name" value="RECOMBINATION PROTEIN RECR"/>
    <property type="match status" value="1"/>
</dbReference>
<dbReference type="Pfam" id="PF21175">
    <property type="entry name" value="RecR_C"/>
    <property type="match status" value="1"/>
</dbReference>
<dbReference type="Pfam" id="PF21176">
    <property type="entry name" value="RecR_HhH"/>
    <property type="match status" value="1"/>
</dbReference>
<dbReference type="Pfam" id="PF02132">
    <property type="entry name" value="RecR_ZnF"/>
    <property type="match status" value="1"/>
</dbReference>
<dbReference type="Pfam" id="PF13662">
    <property type="entry name" value="Toprim_4"/>
    <property type="match status" value="1"/>
</dbReference>
<dbReference type="SMART" id="SM00493">
    <property type="entry name" value="TOPRIM"/>
    <property type="match status" value="1"/>
</dbReference>
<dbReference type="SUPFAM" id="SSF111304">
    <property type="entry name" value="Recombination protein RecR"/>
    <property type="match status" value="1"/>
</dbReference>
<dbReference type="PROSITE" id="PS01300">
    <property type="entry name" value="RECR"/>
    <property type="match status" value="1"/>
</dbReference>
<dbReference type="PROSITE" id="PS50880">
    <property type="entry name" value="TOPRIM"/>
    <property type="match status" value="1"/>
</dbReference>
<reference key="1">
    <citation type="submission" date="2009-03" db="EMBL/GenBank/DDBJ databases">
        <title>Brucella melitensis ATCC 23457 whole genome shotgun sequencing project.</title>
        <authorList>
            <person name="Setubal J.C."/>
            <person name="Boyle S."/>
            <person name="Crasta O.R."/>
            <person name="Gillespie J.J."/>
            <person name="Kenyon R.W."/>
            <person name="Lu J."/>
            <person name="Mane S."/>
            <person name="Nagrani S."/>
            <person name="Shallom J.M."/>
            <person name="Shallom S."/>
            <person name="Shukla M."/>
            <person name="Snyder E.E."/>
            <person name="Sobral B.W."/>
            <person name="Wattam A.R."/>
            <person name="Will R."/>
            <person name="Williams K."/>
            <person name="Yoo H."/>
            <person name="Munk C."/>
            <person name="Tapia R."/>
            <person name="Han C."/>
            <person name="Detter J.C."/>
            <person name="Bruce D."/>
            <person name="Brettin T.S."/>
        </authorList>
    </citation>
    <scope>NUCLEOTIDE SEQUENCE [LARGE SCALE GENOMIC DNA]</scope>
    <source>
        <strain>ATCC 23457</strain>
    </source>
</reference>
<gene>
    <name evidence="1" type="primary">recR</name>
    <name type="ordered locus">BMEA_A0032</name>
</gene>
<evidence type="ECO:0000255" key="1">
    <source>
        <dbReference type="HAMAP-Rule" id="MF_00017"/>
    </source>
</evidence>
<feature type="chain" id="PRO_1000195369" description="Recombination protein RecR">
    <location>
        <begin position="1"/>
        <end position="201"/>
    </location>
</feature>
<feature type="domain" description="Toprim" evidence="1">
    <location>
        <begin position="83"/>
        <end position="178"/>
    </location>
</feature>
<feature type="zinc finger region" description="C4-type" evidence="1">
    <location>
        <begin position="60"/>
        <end position="75"/>
    </location>
</feature>